<reference key="1">
    <citation type="journal article" date="2006" name="Science">
        <title>Genome of rice cluster I archaea -- the key methane producers in the rice rhizosphere.</title>
        <authorList>
            <person name="Erkel C."/>
            <person name="Kube M."/>
            <person name="Reinhardt R."/>
            <person name="Liesack W."/>
        </authorList>
    </citation>
    <scope>NUCLEOTIDE SEQUENCE [LARGE SCALE GENOMIC DNA]</scope>
    <source>
        <strain>DSM 22066 / NBRC 105507 / MRE50</strain>
    </source>
</reference>
<organism>
    <name type="scientific">Methanocella arvoryzae (strain DSM 22066 / NBRC 105507 / MRE50)</name>
    <dbReference type="NCBI Taxonomy" id="351160"/>
    <lineage>
        <taxon>Archaea</taxon>
        <taxon>Methanobacteriati</taxon>
        <taxon>Methanobacteriota</taxon>
        <taxon>Stenosarchaea group</taxon>
        <taxon>Methanomicrobia</taxon>
        <taxon>Methanocellales</taxon>
        <taxon>Methanocellaceae</taxon>
        <taxon>Methanocella</taxon>
    </lineage>
</organism>
<comment type="function">
    <text evidence="1">This protein binds specifically to 23S rRNA. It makes multiple contacts with different domains of the 23S rRNA in the assembled 50S subunit and ribosome.</text>
</comment>
<comment type="function">
    <text evidence="1">The globular domain of the protein is located near the polypeptide exit tunnel on the outside of the subunit, while an extended beta-hairpin is found that lines the wall of the exit tunnel in the center of the 70S ribosome.</text>
</comment>
<comment type="subunit">
    <text evidence="1">Part of the 50S ribosomal subunit.</text>
</comment>
<comment type="similarity">
    <text evidence="1">Belongs to the universal ribosomal protein uL22 family.</text>
</comment>
<name>RL22_METAR</name>
<accession>Q0W1Y4</accession>
<dbReference type="EMBL" id="AM114193">
    <property type="protein sequence ID" value="CAJ37609.1"/>
    <property type="molecule type" value="Genomic_DNA"/>
</dbReference>
<dbReference type="RefSeq" id="WP_012034976.1">
    <property type="nucleotide sequence ID" value="NC_009464.1"/>
</dbReference>
<dbReference type="SMR" id="Q0W1Y4"/>
<dbReference type="STRING" id="351160.RCIX2546"/>
<dbReference type="GeneID" id="5144941"/>
<dbReference type="KEGG" id="rci:RCIX2546"/>
<dbReference type="PATRIC" id="fig|351160.9.peg.674"/>
<dbReference type="eggNOG" id="arCOG04098">
    <property type="taxonomic scope" value="Archaea"/>
</dbReference>
<dbReference type="OrthoDB" id="314984at2157"/>
<dbReference type="Proteomes" id="UP000000663">
    <property type="component" value="Chromosome"/>
</dbReference>
<dbReference type="GO" id="GO:0022625">
    <property type="term" value="C:cytosolic large ribosomal subunit"/>
    <property type="evidence" value="ECO:0007669"/>
    <property type="project" value="TreeGrafter"/>
</dbReference>
<dbReference type="GO" id="GO:0019843">
    <property type="term" value="F:rRNA binding"/>
    <property type="evidence" value="ECO:0007669"/>
    <property type="project" value="UniProtKB-UniRule"/>
</dbReference>
<dbReference type="GO" id="GO:0003735">
    <property type="term" value="F:structural constituent of ribosome"/>
    <property type="evidence" value="ECO:0007669"/>
    <property type="project" value="InterPro"/>
</dbReference>
<dbReference type="GO" id="GO:0002181">
    <property type="term" value="P:cytoplasmic translation"/>
    <property type="evidence" value="ECO:0007669"/>
    <property type="project" value="TreeGrafter"/>
</dbReference>
<dbReference type="CDD" id="cd00336">
    <property type="entry name" value="Ribosomal_L22"/>
    <property type="match status" value="1"/>
</dbReference>
<dbReference type="FunFam" id="3.90.470.10:FF:000015">
    <property type="entry name" value="50S ribosomal protein L22"/>
    <property type="match status" value="1"/>
</dbReference>
<dbReference type="Gene3D" id="3.90.470.10">
    <property type="entry name" value="Ribosomal protein L22/L17"/>
    <property type="match status" value="1"/>
</dbReference>
<dbReference type="HAMAP" id="MF_01331_A">
    <property type="entry name" value="Ribosomal_uL22_A"/>
    <property type="match status" value="1"/>
</dbReference>
<dbReference type="InterPro" id="IPR001063">
    <property type="entry name" value="Ribosomal_uL22"/>
</dbReference>
<dbReference type="InterPro" id="IPR005721">
    <property type="entry name" value="Ribosomal_uL22_euk/arc"/>
</dbReference>
<dbReference type="InterPro" id="IPR036394">
    <property type="entry name" value="Ribosomal_uL22_sf"/>
</dbReference>
<dbReference type="NCBIfam" id="NF003260">
    <property type="entry name" value="PRK04223.1"/>
    <property type="match status" value="1"/>
</dbReference>
<dbReference type="NCBIfam" id="TIGR01038">
    <property type="entry name" value="uL22_arch_euk"/>
    <property type="match status" value="1"/>
</dbReference>
<dbReference type="PANTHER" id="PTHR11593">
    <property type="entry name" value="60S RIBOSOMAL PROTEIN L17"/>
    <property type="match status" value="1"/>
</dbReference>
<dbReference type="PANTHER" id="PTHR11593:SF10">
    <property type="entry name" value="60S RIBOSOMAL PROTEIN L17"/>
    <property type="match status" value="1"/>
</dbReference>
<dbReference type="Pfam" id="PF00237">
    <property type="entry name" value="Ribosomal_L22"/>
    <property type="match status" value="1"/>
</dbReference>
<dbReference type="SUPFAM" id="SSF54843">
    <property type="entry name" value="Ribosomal protein L22"/>
    <property type="match status" value="1"/>
</dbReference>
<protein>
    <recommendedName>
        <fullName evidence="1">Large ribosomal subunit protein uL22</fullName>
    </recommendedName>
    <alternativeName>
        <fullName evidence="2">50S ribosomal protein L22</fullName>
    </alternativeName>
</protein>
<keyword id="KW-1185">Reference proteome</keyword>
<keyword id="KW-0687">Ribonucleoprotein</keyword>
<keyword id="KW-0689">Ribosomal protein</keyword>
<keyword id="KW-0694">RNA-binding</keyword>
<keyword id="KW-0699">rRNA-binding</keyword>
<proteinExistence type="inferred from homology"/>
<feature type="chain" id="PRO_1000052673" description="Large ribosomal subunit protein uL22">
    <location>
        <begin position="1"/>
        <end position="153"/>
    </location>
</feature>
<sequence>MSKVGYTAEFDPATTAKAMAYEINVSPKHCQEICRQIRGMKLSAAKTYLQDVIDKKRSVPFKQHARNVGHKRHQSGWPSGRYPVKASTEILKLLKHAEANAEYKGLETENMRIIHSTSKKGRVIQGIMPRAMGRATAWNIELVTVEVVIGEVR</sequence>
<evidence type="ECO:0000255" key="1">
    <source>
        <dbReference type="HAMAP-Rule" id="MF_01331"/>
    </source>
</evidence>
<evidence type="ECO:0000305" key="2"/>
<gene>
    <name evidence="1" type="primary">rpl22</name>
    <name type="ordered locus">UNCMA_06470</name>
    <name type="ORF">RCIX2546</name>
</gene>